<comment type="function">
    <text evidence="1 2">Transfers the sialyl residue from CMP-N-acetyl-beta-neuraminate to the terminal galactose residue on sugar chains of glycoproteins and glycolipids. It's alpha-2,3-sialyltransferase activity is specific toward type II glycan chains (Galbeta1-4GlcNAc) on glycoproteins and glycolipids such as neolactosides nLc4Cer and nLc6Cer, whose sialyl-products serve as precursors for the Lewis X antigen (By similarity). Critically involved in the synthesis of functional selectin ligands needed for neutrophil recruitment during inflammation and lymphocyte homing to the lymph nodes (By similarity).</text>
</comment>
<comment type="catalytic activity">
    <reaction evidence="2">
        <text>a neolactoside nLc4Cer(d18:1(4E)) + CMP-N-acetyl-beta-neuraminate = a neolactoside IV(3)-alpha-NeuAc-nLc4Cer(d18:1(4E)) + CMP + H(+)</text>
        <dbReference type="Rhea" id="RHEA:18913"/>
        <dbReference type="ChEBI" id="CHEBI:15378"/>
        <dbReference type="ChEBI" id="CHEBI:17006"/>
        <dbReference type="ChEBI" id="CHEBI:57812"/>
        <dbReference type="ChEBI" id="CHEBI:58665"/>
        <dbReference type="ChEBI" id="CHEBI:60377"/>
        <dbReference type="EC" id="2.4.3.6"/>
    </reaction>
    <physiologicalReaction direction="left-to-right" evidence="2">
        <dbReference type="Rhea" id="RHEA:18914"/>
    </physiologicalReaction>
</comment>
<comment type="catalytic activity">
    <reaction evidence="2">
        <text>a beta-D-galactosyl-(1-&gt;4)-N-acetyl-beta-D-glucosaminyl derivative + CMP-N-acetyl-beta-neuraminate = an N-acetyl-alpha-neuraminyl-(2-&gt;3)-beta-D-galactosyl-(1-&gt;4)-N-acetyl-beta-D-glucosaminyl derivative + CMP + H(+)</text>
        <dbReference type="Rhea" id="RHEA:52316"/>
        <dbReference type="ChEBI" id="CHEBI:15378"/>
        <dbReference type="ChEBI" id="CHEBI:57812"/>
        <dbReference type="ChEBI" id="CHEBI:60377"/>
        <dbReference type="ChEBI" id="CHEBI:133507"/>
        <dbReference type="ChEBI" id="CHEBI:136545"/>
        <dbReference type="EC" id="2.4.3.6"/>
    </reaction>
    <physiologicalReaction direction="left-to-right" evidence="2">
        <dbReference type="Rhea" id="RHEA:52317"/>
    </physiologicalReaction>
</comment>
<comment type="catalytic activity">
    <reaction evidence="2">
        <text>a neolactoside nLc6Cer(d18:1(4E)) + CMP-N-acetyl-beta-neuraminate = a neolactoside VI(3)-alpha-NeuNAc-nLc6Cer(d18:1(4E)) + CMP + H(+)</text>
        <dbReference type="Rhea" id="RHEA:80751"/>
        <dbReference type="ChEBI" id="CHEBI:15378"/>
        <dbReference type="ChEBI" id="CHEBI:57812"/>
        <dbReference type="ChEBI" id="CHEBI:60377"/>
        <dbReference type="ChEBI" id="CHEBI:61610"/>
        <dbReference type="ChEBI" id="CHEBI:144452"/>
    </reaction>
    <physiologicalReaction direction="left-to-right" evidence="2">
        <dbReference type="Rhea" id="RHEA:80752"/>
    </physiologicalReaction>
</comment>
<comment type="subcellular location">
    <subcellularLocation>
        <location evidence="4">Golgi apparatus membrane</location>
        <topology evidence="4">Single-pass type II membrane protein</topology>
    </subcellularLocation>
</comment>
<comment type="similarity">
    <text evidence="4">Belongs to the glycosyltransferase 29 family.</text>
</comment>
<keyword id="KW-0325">Glycoprotein</keyword>
<keyword id="KW-0328">Glycosyltransferase</keyword>
<keyword id="KW-0333">Golgi apparatus</keyword>
<keyword id="KW-0472">Membrane</keyword>
<keyword id="KW-1185">Reference proteome</keyword>
<keyword id="KW-0735">Signal-anchor</keyword>
<keyword id="KW-0808">Transferase</keyword>
<keyword id="KW-0812">Transmembrane</keyword>
<keyword id="KW-1133">Transmembrane helix</keyword>
<reference key="1">
    <citation type="submission" date="2004-11" db="EMBL/GenBank/DDBJ databases">
        <authorList>
            <consortium name="The German cDNA consortium"/>
        </authorList>
    </citation>
    <scope>NUCLEOTIDE SEQUENCE [LARGE SCALE MRNA]</scope>
    <source>
        <tissue>Heart</tissue>
    </source>
</reference>
<dbReference type="EC" id="2.4.3.6" evidence="2"/>
<dbReference type="EMBL" id="CR857649">
    <property type="protein sequence ID" value="CAH89922.1"/>
    <property type="molecule type" value="mRNA"/>
</dbReference>
<dbReference type="RefSeq" id="NP_001124903.1">
    <property type="nucleotide sequence ID" value="NM_001131431.1"/>
</dbReference>
<dbReference type="SMR" id="Q5RE85"/>
<dbReference type="STRING" id="9601.ENSPPYP00000015216"/>
<dbReference type="CAZy" id="GT29">
    <property type="family name" value="Glycosyltransferase Family 29"/>
</dbReference>
<dbReference type="GlyCosmos" id="Q5RE85">
    <property type="glycosylation" value="6 sites, No reported glycans"/>
</dbReference>
<dbReference type="GeneID" id="100171770"/>
<dbReference type="KEGG" id="pon:100171770"/>
<dbReference type="CTD" id="10402"/>
<dbReference type="eggNOG" id="KOG2692">
    <property type="taxonomic scope" value="Eukaryota"/>
</dbReference>
<dbReference type="InParanoid" id="Q5RE85"/>
<dbReference type="OrthoDB" id="10264956at2759"/>
<dbReference type="Proteomes" id="UP000001595">
    <property type="component" value="Unplaced"/>
</dbReference>
<dbReference type="GO" id="GO:0000139">
    <property type="term" value="C:Golgi membrane"/>
    <property type="evidence" value="ECO:0007669"/>
    <property type="project" value="UniProtKB-SubCell"/>
</dbReference>
<dbReference type="GO" id="GO:0008118">
    <property type="term" value="F:N-acetyllactosaminide alpha-2,3-sialyltransferase activity"/>
    <property type="evidence" value="ECO:0000250"/>
    <property type="project" value="UniProtKB"/>
</dbReference>
<dbReference type="GO" id="GO:0071354">
    <property type="term" value="P:cellular response to interleukin-6"/>
    <property type="evidence" value="ECO:0000250"/>
    <property type="project" value="UniProtKB"/>
</dbReference>
<dbReference type="GO" id="GO:0009247">
    <property type="term" value="P:glycolipid biosynthetic process"/>
    <property type="evidence" value="ECO:0000250"/>
    <property type="project" value="UniProtKB"/>
</dbReference>
<dbReference type="GO" id="GO:0006486">
    <property type="term" value="P:protein glycosylation"/>
    <property type="evidence" value="ECO:0000250"/>
    <property type="project" value="UniProtKB"/>
</dbReference>
<dbReference type="CDD" id="cd23984">
    <property type="entry name" value="GT29_ST3GAL6"/>
    <property type="match status" value="1"/>
</dbReference>
<dbReference type="FunFam" id="3.90.1480.20:FF:000007">
    <property type="entry name" value="Type 2 lactosamine alpha-2,3-sialyltransferase"/>
    <property type="match status" value="1"/>
</dbReference>
<dbReference type="Gene3D" id="3.90.1480.20">
    <property type="entry name" value="Glycosyl transferase family 29"/>
    <property type="match status" value="1"/>
</dbReference>
<dbReference type="InterPro" id="IPR001675">
    <property type="entry name" value="Glyco_trans_29"/>
</dbReference>
<dbReference type="InterPro" id="IPR051142">
    <property type="entry name" value="Glycosyltransferase_29"/>
</dbReference>
<dbReference type="InterPro" id="IPR038578">
    <property type="entry name" value="GT29-like_sf"/>
</dbReference>
<dbReference type="InterPro" id="IPR012163">
    <property type="entry name" value="Sialyl_trans"/>
</dbReference>
<dbReference type="PANTHER" id="PTHR13713">
    <property type="entry name" value="SIALYLTRANSFERASE"/>
    <property type="match status" value="1"/>
</dbReference>
<dbReference type="PANTHER" id="PTHR13713:SF8">
    <property type="entry name" value="TYPE 2 LACTOSAMINE ALPHA-2,3-SIALYLTRANSFERASE"/>
    <property type="match status" value="1"/>
</dbReference>
<dbReference type="Pfam" id="PF00777">
    <property type="entry name" value="Glyco_transf_29"/>
    <property type="match status" value="1"/>
</dbReference>
<dbReference type="PIRSF" id="PIRSF005557">
    <property type="entry name" value="Sialyl_trans"/>
    <property type="match status" value="1"/>
</dbReference>
<organism>
    <name type="scientific">Pongo abelii</name>
    <name type="common">Sumatran orangutan</name>
    <name type="synonym">Pongo pygmaeus abelii</name>
    <dbReference type="NCBI Taxonomy" id="9601"/>
    <lineage>
        <taxon>Eukaryota</taxon>
        <taxon>Metazoa</taxon>
        <taxon>Chordata</taxon>
        <taxon>Craniata</taxon>
        <taxon>Vertebrata</taxon>
        <taxon>Euteleostomi</taxon>
        <taxon>Mammalia</taxon>
        <taxon>Eutheria</taxon>
        <taxon>Euarchontoglires</taxon>
        <taxon>Primates</taxon>
        <taxon>Haplorrhini</taxon>
        <taxon>Catarrhini</taxon>
        <taxon>Hominidae</taxon>
        <taxon>Pongo</taxon>
    </lineage>
</organism>
<sequence>MRGYLVAIFLSAVFLYYVLHCILWGTNVYWAAPVEMKRRNKIQPCLSKPAFASLLRFHQFHPFLCAADFRKIASLYGSDKFDLPYGMRTSAEYFRLALSKLQSCDLFDEFDNIPCKKCVVVGNGGVLKNKTLGEKIDSYDVIIRMNNGPVLGHEEEVGRRTTFRLFYPESVFSDPIHNDPNTTVILTAFKPHDLRWLLELLMGDKINTNGFWKKPALNLIYKPYQIRILDPFIIRTAAYELLHFPKVFPKNQKPKHPTTGIIAITLAFYICHEVHLAGFKYNFSDLKSPLHYYGNATMSLMNKNAYHNVTAEQLFLKDIIEKNLVINLTQD</sequence>
<proteinExistence type="evidence at transcript level"/>
<evidence type="ECO:0000250" key="1">
    <source>
        <dbReference type="UniProtKB" id="Q8VIB3"/>
    </source>
</evidence>
<evidence type="ECO:0000250" key="2">
    <source>
        <dbReference type="UniProtKB" id="Q9Y274"/>
    </source>
</evidence>
<evidence type="ECO:0000255" key="3"/>
<evidence type="ECO:0000305" key="4"/>
<gene>
    <name type="primary">ST3GAL6</name>
    <name type="synonym">SIAT10</name>
</gene>
<accession>Q5RE85</accession>
<protein>
    <recommendedName>
        <fullName>Type 2 lactosamine alpha-2,3-sialyltransferase</fullName>
        <ecNumber evidence="2">2.4.3.6</ecNumber>
    </recommendedName>
    <alternativeName>
        <fullName>CMP-NeuAc:beta-galactoside alpha-2,3-sialyltransferase VI</fullName>
    </alternativeName>
    <alternativeName>
        <fullName>ST3Gal VI</fullName>
        <shortName>ST3GalVI</shortName>
    </alternativeName>
    <alternativeName>
        <fullName>Sialyltransferase 10</fullName>
    </alternativeName>
</protein>
<name>SIA10_PONAB</name>
<feature type="chain" id="PRO_0000331506" description="Type 2 lactosamine alpha-2,3-sialyltransferase">
    <location>
        <begin position="1"/>
        <end position="331"/>
    </location>
</feature>
<feature type="topological domain" description="Cytoplasmic" evidence="3">
    <location>
        <begin position="1"/>
        <end position="4"/>
    </location>
</feature>
<feature type="transmembrane region" description="Helical; Signal-anchor for type II membrane protein" evidence="3">
    <location>
        <begin position="5"/>
        <end position="25"/>
    </location>
</feature>
<feature type="topological domain" description="Lumenal" evidence="3">
    <location>
        <begin position="26"/>
        <end position="331"/>
    </location>
</feature>
<feature type="glycosylation site" description="N-linked (GlcNAc...) asparagine" evidence="3">
    <location>
        <position position="129"/>
    </location>
</feature>
<feature type="glycosylation site" description="N-linked (GlcNAc...) asparagine" evidence="3">
    <location>
        <position position="181"/>
    </location>
</feature>
<feature type="glycosylation site" description="N-linked (GlcNAc...) asparagine" evidence="3">
    <location>
        <position position="282"/>
    </location>
</feature>
<feature type="glycosylation site" description="N-linked (GlcNAc...) asparagine" evidence="3">
    <location>
        <position position="295"/>
    </location>
</feature>
<feature type="glycosylation site" description="N-linked (GlcNAc...) asparagine" evidence="3">
    <location>
        <position position="308"/>
    </location>
</feature>
<feature type="glycosylation site" description="N-linked (GlcNAc...) asparagine" evidence="3">
    <location>
        <position position="327"/>
    </location>
</feature>